<accession>A9BDU1</accession>
<proteinExistence type="inferred from homology"/>
<comment type="function">
    <text evidence="1">NDH-1 shuttles electrons from an unknown electron donor, via FMN and iron-sulfur (Fe-S) centers, to quinones in the respiratory and/or the photosynthetic chain. The immediate electron acceptor for the enzyme in this species is believed to be plastoquinone. Couples the redox reaction to proton translocation, and thus conserves the redox energy in a proton gradient. Cyanobacterial NDH-1 also plays a role in inorganic carbon-concentration.</text>
</comment>
<comment type="catalytic activity">
    <reaction evidence="1">
        <text>a plastoquinone + NADH + (n+1) H(+)(in) = a plastoquinol + NAD(+) + n H(+)(out)</text>
        <dbReference type="Rhea" id="RHEA:42608"/>
        <dbReference type="Rhea" id="RHEA-COMP:9561"/>
        <dbReference type="Rhea" id="RHEA-COMP:9562"/>
        <dbReference type="ChEBI" id="CHEBI:15378"/>
        <dbReference type="ChEBI" id="CHEBI:17757"/>
        <dbReference type="ChEBI" id="CHEBI:57540"/>
        <dbReference type="ChEBI" id="CHEBI:57945"/>
        <dbReference type="ChEBI" id="CHEBI:62192"/>
    </reaction>
</comment>
<comment type="catalytic activity">
    <reaction evidence="1">
        <text>a plastoquinone + NADPH + (n+1) H(+)(in) = a plastoquinol + NADP(+) + n H(+)(out)</text>
        <dbReference type="Rhea" id="RHEA:42612"/>
        <dbReference type="Rhea" id="RHEA-COMP:9561"/>
        <dbReference type="Rhea" id="RHEA-COMP:9562"/>
        <dbReference type="ChEBI" id="CHEBI:15378"/>
        <dbReference type="ChEBI" id="CHEBI:17757"/>
        <dbReference type="ChEBI" id="CHEBI:57783"/>
        <dbReference type="ChEBI" id="CHEBI:58349"/>
        <dbReference type="ChEBI" id="CHEBI:62192"/>
    </reaction>
</comment>
<comment type="subunit">
    <text evidence="1">NDH-1 can be composed of about 15 different subunits; different subcomplexes with different compositions have been identified which probably have different functions.</text>
</comment>
<comment type="subcellular location">
    <subcellularLocation>
        <location evidence="1">Cellular thylakoid membrane</location>
        <topology evidence="1">Multi-pass membrane protein</topology>
    </subcellularLocation>
</comment>
<comment type="similarity">
    <text evidence="1">Belongs to the complex I subunit 3 family.</text>
</comment>
<feature type="chain" id="PRO_0000362720" description="NAD(P)H-quinone oxidoreductase subunit 3">
    <location>
        <begin position="1"/>
        <end position="120"/>
    </location>
</feature>
<feature type="transmembrane region" description="Helical" evidence="1">
    <location>
        <begin position="6"/>
        <end position="26"/>
    </location>
</feature>
<feature type="transmembrane region" description="Helical" evidence="1">
    <location>
        <begin position="64"/>
        <end position="84"/>
    </location>
</feature>
<feature type="transmembrane region" description="Helical" evidence="1">
    <location>
        <begin position="89"/>
        <end position="109"/>
    </location>
</feature>
<keyword id="KW-0472">Membrane</keyword>
<keyword id="KW-0520">NAD</keyword>
<keyword id="KW-0521">NADP</keyword>
<keyword id="KW-0618">Plastoquinone</keyword>
<keyword id="KW-0874">Quinone</keyword>
<keyword id="KW-1185">Reference proteome</keyword>
<keyword id="KW-0793">Thylakoid</keyword>
<keyword id="KW-1278">Translocase</keyword>
<keyword id="KW-0812">Transmembrane</keyword>
<keyword id="KW-1133">Transmembrane helix</keyword>
<keyword id="KW-0813">Transport</keyword>
<name>NU3C_PROM4</name>
<protein>
    <recommendedName>
        <fullName evidence="1">NAD(P)H-quinone oxidoreductase subunit 3</fullName>
        <ecNumber evidence="1">7.1.1.-</ecNumber>
    </recommendedName>
    <alternativeName>
        <fullName evidence="1">NAD(P)H dehydrogenase subunit 3</fullName>
    </alternativeName>
    <alternativeName>
        <fullName evidence="1">NADH-plastoquinone oxidoreductase subunit 3</fullName>
    </alternativeName>
    <alternativeName>
        <fullName evidence="1">NDH-1 subunit 3</fullName>
        <shortName evidence="1">NDH-C</shortName>
    </alternativeName>
</protein>
<sequence length="120" mass="13518">MFSLQGYDAFLGFLLISAAVPVLALVTNKLLSPKSQTGERELTYESGMEPIGGAWIQFNIRYYMFALVFVIFDVETVFLYPWAVAFHKLGLLAFIEALIFIAILIVALAYAWRKGALEWS</sequence>
<reference key="1">
    <citation type="journal article" date="2007" name="PLoS Genet.">
        <title>Patterns and implications of gene gain and loss in the evolution of Prochlorococcus.</title>
        <authorList>
            <person name="Kettler G.C."/>
            <person name="Martiny A.C."/>
            <person name="Huang K."/>
            <person name="Zucker J."/>
            <person name="Coleman M.L."/>
            <person name="Rodrigue S."/>
            <person name="Chen F."/>
            <person name="Lapidus A."/>
            <person name="Ferriera S."/>
            <person name="Johnson J."/>
            <person name="Steglich C."/>
            <person name="Church G.M."/>
            <person name="Richardson P."/>
            <person name="Chisholm S.W."/>
        </authorList>
    </citation>
    <scope>NUCLEOTIDE SEQUENCE [LARGE SCALE GENOMIC DNA]</scope>
    <source>
        <strain>MIT 9211</strain>
    </source>
</reference>
<organism>
    <name type="scientific">Prochlorococcus marinus (strain MIT 9211)</name>
    <dbReference type="NCBI Taxonomy" id="93059"/>
    <lineage>
        <taxon>Bacteria</taxon>
        <taxon>Bacillati</taxon>
        <taxon>Cyanobacteriota</taxon>
        <taxon>Cyanophyceae</taxon>
        <taxon>Synechococcales</taxon>
        <taxon>Prochlorococcaceae</taxon>
        <taxon>Prochlorococcus</taxon>
    </lineage>
</organism>
<dbReference type="EC" id="7.1.1.-" evidence="1"/>
<dbReference type="EMBL" id="CP000878">
    <property type="protein sequence ID" value="ABX08251.1"/>
    <property type="molecule type" value="Genomic_DNA"/>
</dbReference>
<dbReference type="RefSeq" id="WP_012194876.1">
    <property type="nucleotide sequence ID" value="NC_009976.1"/>
</dbReference>
<dbReference type="SMR" id="A9BDU1"/>
<dbReference type="STRING" id="93059.P9211_03201"/>
<dbReference type="KEGG" id="pmj:P9211_03201"/>
<dbReference type="eggNOG" id="COG0838">
    <property type="taxonomic scope" value="Bacteria"/>
</dbReference>
<dbReference type="HOGENOM" id="CLU_119549_1_1_3"/>
<dbReference type="OrthoDB" id="9791970at2"/>
<dbReference type="Proteomes" id="UP000000788">
    <property type="component" value="Chromosome"/>
</dbReference>
<dbReference type="GO" id="GO:0030964">
    <property type="term" value="C:NADH dehydrogenase complex"/>
    <property type="evidence" value="ECO:0007669"/>
    <property type="project" value="TreeGrafter"/>
</dbReference>
<dbReference type="GO" id="GO:0031676">
    <property type="term" value="C:plasma membrane-derived thylakoid membrane"/>
    <property type="evidence" value="ECO:0007669"/>
    <property type="project" value="UniProtKB-SubCell"/>
</dbReference>
<dbReference type="GO" id="GO:0008137">
    <property type="term" value="F:NADH dehydrogenase (ubiquinone) activity"/>
    <property type="evidence" value="ECO:0007669"/>
    <property type="project" value="InterPro"/>
</dbReference>
<dbReference type="GO" id="GO:0048038">
    <property type="term" value="F:quinone binding"/>
    <property type="evidence" value="ECO:0007669"/>
    <property type="project" value="UniProtKB-KW"/>
</dbReference>
<dbReference type="GO" id="GO:0019684">
    <property type="term" value="P:photosynthesis, light reaction"/>
    <property type="evidence" value="ECO:0007669"/>
    <property type="project" value="UniProtKB-UniRule"/>
</dbReference>
<dbReference type="Gene3D" id="1.20.58.1610">
    <property type="entry name" value="NADH:ubiquinone/plastoquinone oxidoreductase, chain 3"/>
    <property type="match status" value="1"/>
</dbReference>
<dbReference type="HAMAP" id="MF_01394">
    <property type="entry name" value="NDH1_NuoA"/>
    <property type="match status" value="1"/>
</dbReference>
<dbReference type="InterPro" id="IPR023043">
    <property type="entry name" value="NAD(P)H_OxRDtase_bac/plastid"/>
</dbReference>
<dbReference type="InterPro" id="IPR000440">
    <property type="entry name" value="NADH_UbQ/plastoQ_OxRdtase_su3"/>
</dbReference>
<dbReference type="InterPro" id="IPR038430">
    <property type="entry name" value="NDAH_ubi_oxred_su3_sf"/>
</dbReference>
<dbReference type="PANTHER" id="PTHR11058">
    <property type="entry name" value="NADH-UBIQUINONE OXIDOREDUCTASE CHAIN 3"/>
    <property type="match status" value="1"/>
</dbReference>
<dbReference type="PANTHER" id="PTHR11058:SF9">
    <property type="entry name" value="NADH-UBIQUINONE OXIDOREDUCTASE CHAIN 3"/>
    <property type="match status" value="1"/>
</dbReference>
<dbReference type="Pfam" id="PF00507">
    <property type="entry name" value="Oxidored_q4"/>
    <property type="match status" value="1"/>
</dbReference>
<gene>
    <name evidence="1" type="primary">ndhC</name>
    <name type="ordered locus">P9211_03201</name>
</gene>
<evidence type="ECO:0000255" key="1">
    <source>
        <dbReference type="HAMAP-Rule" id="MF_01394"/>
    </source>
</evidence>